<accession>Q91X34</accession>
<accession>A2AKK7</accession>
<accession>O08833</accession>
<accession>Q8C1I3</accession>
<name>BAAT_MOUSE</name>
<reference key="1">
    <citation type="journal article" date="1997" name="J. Lipid Res.">
        <title>Cloning, expression, and chromosomal localization of mouse liver bile acid CoA:amino acid N-acyltransferase.</title>
        <authorList>
            <person name="Falany C.N."/>
            <person name="Fortinberry H."/>
            <person name="Leiter E.H."/>
            <person name="Barnes S."/>
        </authorList>
    </citation>
    <scope>NUCLEOTIDE SEQUENCE [MRNA]</scope>
    <scope>FUNCTION</scope>
    <scope>CATALYTIC ACTIVITY</scope>
    <scope>TISSUE SPECIFICITY</scope>
    <scope>BIOPHYSICOCHEMICAL PROPERTIES</scope>
</reference>
<reference key="2">
    <citation type="journal article" date="2005" name="Science">
        <title>The transcriptional landscape of the mammalian genome.</title>
        <authorList>
            <person name="Carninci P."/>
            <person name="Kasukawa T."/>
            <person name="Katayama S."/>
            <person name="Gough J."/>
            <person name="Frith M.C."/>
            <person name="Maeda N."/>
            <person name="Oyama R."/>
            <person name="Ravasi T."/>
            <person name="Lenhard B."/>
            <person name="Wells C."/>
            <person name="Kodzius R."/>
            <person name="Shimokawa K."/>
            <person name="Bajic V.B."/>
            <person name="Brenner S.E."/>
            <person name="Batalov S."/>
            <person name="Forrest A.R."/>
            <person name="Zavolan M."/>
            <person name="Davis M.J."/>
            <person name="Wilming L.G."/>
            <person name="Aidinis V."/>
            <person name="Allen J.E."/>
            <person name="Ambesi-Impiombato A."/>
            <person name="Apweiler R."/>
            <person name="Aturaliya R.N."/>
            <person name="Bailey T.L."/>
            <person name="Bansal M."/>
            <person name="Baxter L."/>
            <person name="Beisel K.W."/>
            <person name="Bersano T."/>
            <person name="Bono H."/>
            <person name="Chalk A.M."/>
            <person name="Chiu K.P."/>
            <person name="Choudhary V."/>
            <person name="Christoffels A."/>
            <person name="Clutterbuck D.R."/>
            <person name="Crowe M.L."/>
            <person name="Dalla E."/>
            <person name="Dalrymple B.P."/>
            <person name="de Bono B."/>
            <person name="Della Gatta G."/>
            <person name="di Bernardo D."/>
            <person name="Down T."/>
            <person name="Engstrom P."/>
            <person name="Fagiolini M."/>
            <person name="Faulkner G."/>
            <person name="Fletcher C.F."/>
            <person name="Fukushima T."/>
            <person name="Furuno M."/>
            <person name="Futaki S."/>
            <person name="Gariboldi M."/>
            <person name="Georgii-Hemming P."/>
            <person name="Gingeras T.R."/>
            <person name="Gojobori T."/>
            <person name="Green R.E."/>
            <person name="Gustincich S."/>
            <person name="Harbers M."/>
            <person name="Hayashi Y."/>
            <person name="Hensch T.K."/>
            <person name="Hirokawa N."/>
            <person name="Hill D."/>
            <person name="Huminiecki L."/>
            <person name="Iacono M."/>
            <person name="Ikeo K."/>
            <person name="Iwama A."/>
            <person name="Ishikawa T."/>
            <person name="Jakt M."/>
            <person name="Kanapin A."/>
            <person name="Katoh M."/>
            <person name="Kawasawa Y."/>
            <person name="Kelso J."/>
            <person name="Kitamura H."/>
            <person name="Kitano H."/>
            <person name="Kollias G."/>
            <person name="Krishnan S.P."/>
            <person name="Kruger A."/>
            <person name="Kummerfeld S.K."/>
            <person name="Kurochkin I.V."/>
            <person name="Lareau L.F."/>
            <person name="Lazarevic D."/>
            <person name="Lipovich L."/>
            <person name="Liu J."/>
            <person name="Liuni S."/>
            <person name="McWilliam S."/>
            <person name="Madan Babu M."/>
            <person name="Madera M."/>
            <person name="Marchionni L."/>
            <person name="Matsuda H."/>
            <person name="Matsuzawa S."/>
            <person name="Miki H."/>
            <person name="Mignone F."/>
            <person name="Miyake S."/>
            <person name="Morris K."/>
            <person name="Mottagui-Tabar S."/>
            <person name="Mulder N."/>
            <person name="Nakano N."/>
            <person name="Nakauchi H."/>
            <person name="Ng P."/>
            <person name="Nilsson R."/>
            <person name="Nishiguchi S."/>
            <person name="Nishikawa S."/>
            <person name="Nori F."/>
            <person name="Ohara O."/>
            <person name="Okazaki Y."/>
            <person name="Orlando V."/>
            <person name="Pang K.C."/>
            <person name="Pavan W.J."/>
            <person name="Pavesi G."/>
            <person name="Pesole G."/>
            <person name="Petrovsky N."/>
            <person name="Piazza S."/>
            <person name="Reed J."/>
            <person name="Reid J.F."/>
            <person name="Ring B.Z."/>
            <person name="Ringwald M."/>
            <person name="Rost B."/>
            <person name="Ruan Y."/>
            <person name="Salzberg S.L."/>
            <person name="Sandelin A."/>
            <person name="Schneider C."/>
            <person name="Schoenbach C."/>
            <person name="Sekiguchi K."/>
            <person name="Semple C.A."/>
            <person name="Seno S."/>
            <person name="Sessa L."/>
            <person name="Sheng Y."/>
            <person name="Shibata Y."/>
            <person name="Shimada H."/>
            <person name="Shimada K."/>
            <person name="Silva D."/>
            <person name="Sinclair B."/>
            <person name="Sperling S."/>
            <person name="Stupka E."/>
            <person name="Sugiura K."/>
            <person name="Sultana R."/>
            <person name="Takenaka Y."/>
            <person name="Taki K."/>
            <person name="Tammoja K."/>
            <person name="Tan S.L."/>
            <person name="Tang S."/>
            <person name="Taylor M.S."/>
            <person name="Tegner J."/>
            <person name="Teichmann S.A."/>
            <person name="Ueda H.R."/>
            <person name="van Nimwegen E."/>
            <person name="Verardo R."/>
            <person name="Wei C.L."/>
            <person name="Yagi K."/>
            <person name="Yamanishi H."/>
            <person name="Zabarovsky E."/>
            <person name="Zhu S."/>
            <person name="Zimmer A."/>
            <person name="Hide W."/>
            <person name="Bult C."/>
            <person name="Grimmond S.M."/>
            <person name="Teasdale R.D."/>
            <person name="Liu E.T."/>
            <person name="Brusic V."/>
            <person name="Quackenbush J."/>
            <person name="Wahlestedt C."/>
            <person name="Mattick J.S."/>
            <person name="Hume D.A."/>
            <person name="Kai C."/>
            <person name="Sasaki D."/>
            <person name="Tomaru Y."/>
            <person name="Fukuda S."/>
            <person name="Kanamori-Katayama M."/>
            <person name="Suzuki M."/>
            <person name="Aoki J."/>
            <person name="Arakawa T."/>
            <person name="Iida J."/>
            <person name="Imamura K."/>
            <person name="Itoh M."/>
            <person name="Kato T."/>
            <person name="Kawaji H."/>
            <person name="Kawagashira N."/>
            <person name="Kawashima T."/>
            <person name="Kojima M."/>
            <person name="Kondo S."/>
            <person name="Konno H."/>
            <person name="Nakano K."/>
            <person name="Ninomiya N."/>
            <person name="Nishio T."/>
            <person name="Okada M."/>
            <person name="Plessy C."/>
            <person name="Shibata K."/>
            <person name="Shiraki T."/>
            <person name="Suzuki S."/>
            <person name="Tagami M."/>
            <person name="Waki K."/>
            <person name="Watahiki A."/>
            <person name="Okamura-Oho Y."/>
            <person name="Suzuki H."/>
            <person name="Kawai J."/>
            <person name="Hayashizaki Y."/>
        </authorList>
    </citation>
    <scope>NUCLEOTIDE SEQUENCE [LARGE SCALE MRNA]</scope>
    <source>
        <strain>C57BL/6J</strain>
        <tissue>Thymus</tissue>
    </source>
</reference>
<reference key="3">
    <citation type="journal article" date="2009" name="PLoS Biol.">
        <title>Lineage-specific biology revealed by a finished genome assembly of the mouse.</title>
        <authorList>
            <person name="Church D.M."/>
            <person name="Goodstadt L."/>
            <person name="Hillier L.W."/>
            <person name="Zody M.C."/>
            <person name="Goldstein S."/>
            <person name="She X."/>
            <person name="Bult C.J."/>
            <person name="Agarwala R."/>
            <person name="Cherry J.L."/>
            <person name="DiCuccio M."/>
            <person name="Hlavina W."/>
            <person name="Kapustin Y."/>
            <person name="Meric P."/>
            <person name="Maglott D."/>
            <person name="Birtle Z."/>
            <person name="Marques A.C."/>
            <person name="Graves T."/>
            <person name="Zhou S."/>
            <person name="Teague B."/>
            <person name="Potamousis K."/>
            <person name="Churas C."/>
            <person name="Place M."/>
            <person name="Herschleb J."/>
            <person name="Runnheim R."/>
            <person name="Forrest D."/>
            <person name="Amos-Landgraf J."/>
            <person name="Schwartz D.C."/>
            <person name="Cheng Z."/>
            <person name="Lindblad-Toh K."/>
            <person name="Eichler E.E."/>
            <person name="Ponting C.P."/>
        </authorList>
    </citation>
    <scope>NUCLEOTIDE SEQUENCE [LARGE SCALE GENOMIC DNA]</scope>
    <source>
        <strain>C57BL/6J</strain>
    </source>
</reference>
<reference key="4">
    <citation type="submission" date="2005-09" db="EMBL/GenBank/DDBJ databases">
        <authorList>
            <person name="Mural R.J."/>
            <person name="Adams M.D."/>
            <person name="Myers E.W."/>
            <person name="Smith H.O."/>
            <person name="Venter J.C."/>
        </authorList>
    </citation>
    <scope>NUCLEOTIDE SEQUENCE [LARGE SCALE GENOMIC DNA]</scope>
</reference>
<reference key="5">
    <citation type="journal article" date="2004" name="Genome Res.">
        <title>The status, quality, and expansion of the NIH full-length cDNA project: the Mammalian Gene Collection (MGC).</title>
        <authorList>
            <consortium name="The MGC Project Team"/>
        </authorList>
    </citation>
    <scope>NUCLEOTIDE SEQUENCE [LARGE SCALE MRNA]</scope>
    <source>
        <strain>FVB/N</strain>
        <tissue>Liver</tissue>
    </source>
</reference>
<reference key="6">
    <citation type="journal article" date="2003" name="J. Biol. Chem.">
        <title>The human bile acid-CoA:amino acid N-acyltransferase functions in the conjugation of fatty acids to glycine.</title>
        <authorList>
            <person name="O'Byrne J."/>
            <person name="Hunt M.C."/>
            <person name="Rai D.K."/>
            <person name="Saeki M."/>
            <person name="Alexson S.E."/>
        </authorList>
    </citation>
    <scope>TISSUE SPECIFICITY</scope>
</reference>
<reference key="7">
    <citation type="journal article" date="2010" name="Cell">
        <title>A tissue-specific atlas of mouse protein phosphorylation and expression.</title>
        <authorList>
            <person name="Huttlin E.L."/>
            <person name="Jedrychowski M.P."/>
            <person name="Elias J.E."/>
            <person name="Goswami T."/>
            <person name="Rad R."/>
            <person name="Beausoleil S.A."/>
            <person name="Villen J."/>
            <person name="Haas W."/>
            <person name="Sowa M.E."/>
            <person name="Gygi S.P."/>
        </authorList>
    </citation>
    <scope>IDENTIFICATION BY MASS SPECTROMETRY [LARGE SCALE ANALYSIS]</scope>
    <source>
        <tissue>Liver</tissue>
    </source>
</reference>
<reference key="8">
    <citation type="journal article" date="2013" name="Mol. Cell">
        <title>SIRT5-mediated lysine desuccinylation impacts diverse metabolic pathways.</title>
        <authorList>
            <person name="Park J."/>
            <person name="Chen Y."/>
            <person name="Tishkoff D.X."/>
            <person name="Peng C."/>
            <person name="Tan M."/>
            <person name="Dai L."/>
            <person name="Xie Z."/>
            <person name="Zhang Y."/>
            <person name="Zwaans B.M."/>
            <person name="Skinner M.E."/>
            <person name="Lombard D.B."/>
            <person name="Zhao Y."/>
        </authorList>
    </citation>
    <scope>SUCCINYLATION [LARGE SCALE ANALYSIS] AT LYS-40; LYS-346; LYS-350 AND LYS-409</scope>
    <scope>IDENTIFICATION BY MASS SPECTROMETRY [LARGE SCALE ANALYSIS]</scope>
    <source>
        <tissue>Liver</tissue>
    </source>
</reference>
<gene>
    <name type="primary">Baat</name>
</gene>
<evidence type="ECO:0000250" key="1"/>
<evidence type="ECO:0000250" key="2">
    <source>
        <dbReference type="UniProtKB" id="Q14032"/>
    </source>
</evidence>
<evidence type="ECO:0000250" key="3">
    <source>
        <dbReference type="UniProtKB" id="Q63276"/>
    </source>
</evidence>
<evidence type="ECO:0000269" key="4">
    <source>
    </source>
</evidence>
<evidence type="ECO:0000269" key="5">
    <source>
    </source>
</evidence>
<evidence type="ECO:0000305" key="6"/>
<evidence type="ECO:0000305" key="7">
    <source>
    </source>
</evidence>
<evidence type="ECO:0007744" key="8">
    <source>
    </source>
</evidence>
<sequence>MAKLTAVPLSALVDEPVHIQVTGLAPFQVVCLQASLKDEKGNLFSSQAFYRASEVGEVDLEHDPSLGGDYMGVHPMGLFWSLKPEKLLGRLIKRDVMNSPYQIHIKACHPYFPLQDIVVSPPLDSLTLERWYVAPGVKRIQVKESRIRGALFLPPGEGPFPGVIDLFGGAGGLMEFRASLLASRGFATLALAYWNYDDLPSRLEKVDLEYFEEGVEFLLRHPKVLGPGVGILSVCIGAEIGLSMAINLKQIRATVLINGPNFVSQSPHVYHGQVYPPVPSNEEFVVTNALGLVEFYRTFQETADKDSKYCFPIEKAHGHFLFVVGEDDKNLNSKVHANQAIAQLMKNGKKNWTLLSYPGAGHLIEPPYTPLCQASRMPILIPSLSWGGEVIPHAAAQEHSWKEIQKFLKQHLLPDLSSQL</sequence>
<proteinExistence type="evidence at protein level"/>
<organism>
    <name type="scientific">Mus musculus</name>
    <name type="common">Mouse</name>
    <dbReference type="NCBI Taxonomy" id="10090"/>
    <lineage>
        <taxon>Eukaryota</taxon>
        <taxon>Metazoa</taxon>
        <taxon>Chordata</taxon>
        <taxon>Craniata</taxon>
        <taxon>Vertebrata</taxon>
        <taxon>Euteleostomi</taxon>
        <taxon>Mammalia</taxon>
        <taxon>Eutheria</taxon>
        <taxon>Euarchontoglires</taxon>
        <taxon>Glires</taxon>
        <taxon>Rodentia</taxon>
        <taxon>Myomorpha</taxon>
        <taxon>Muroidea</taxon>
        <taxon>Muridae</taxon>
        <taxon>Murinae</taxon>
        <taxon>Mus</taxon>
        <taxon>Mus</taxon>
    </lineage>
</organism>
<feature type="chain" id="PRO_0000202160" description="Bile acid-CoA:amino acid N-acyltransferase">
    <location>
        <begin position="1"/>
        <end position="420"/>
    </location>
</feature>
<feature type="active site" description="Charge relay system" evidence="1">
    <location>
        <position position="235"/>
    </location>
</feature>
<feature type="active site" description="Charge relay system" evidence="1">
    <location>
        <position position="328"/>
    </location>
</feature>
<feature type="active site" description="Charge relay system" evidence="1">
    <location>
        <position position="362"/>
    </location>
</feature>
<feature type="modified residue" description="N6-succinyllysine" evidence="8">
    <location>
        <position position="40"/>
    </location>
</feature>
<feature type="modified residue" description="Phosphoserine" evidence="3">
    <location>
        <position position="125"/>
    </location>
</feature>
<feature type="modified residue" description="N6-succinyllysine" evidence="8">
    <location>
        <position position="346"/>
    </location>
</feature>
<feature type="modified residue" description="N6-succinyllysine" evidence="8">
    <location>
        <position position="350"/>
    </location>
</feature>
<feature type="modified residue" description="N6-succinyllysine" evidence="8">
    <location>
        <position position="409"/>
    </location>
</feature>
<feature type="modified residue" description="Phosphoserine" evidence="3">
    <location>
        <position position="418"/>
    </location>
</feature>
<feature type="sequence conflict" description="In Ref. 1; AAB58325." evidence="6" ref="1">
    <original>M</original>
    <variation>I</variation>
    <location>
        <position position="97"/>
    </location>
</feature>
<feature type="sequence conflict" description="In Ref. 1; AAB58325." evidence="6" ref="1">
    <original>I</original>
    <variation>L</variation>
    <location>
        <position position="117"/>
    </location>
</feature>
<feature type="sequence conflict" description="In Ref. 2; BAC25534." evidence="6" ref="2">
    <original>H</original>
    <variation>Q</variation>
    <location>
        <position position="268"/>
    </location>
</feature>
<feature type="sequence conflict" description="In Ref. 2; BAC25534." evidence="6" ref="2">
    <original>S</original>
    <variation>R</variation>
    <location>
        <position position="385"/>
    </location>
</feature>
<feature type="sequence conflict" description="In Ref. 1; AAB58325." evidence="6" ref="1">
    <original>A</original>
    <variation>SQ</variation>
    <location>
        <position position="394"/>
    </location>
</feature>
<protein>
    <recommendedName>
        <fullName>Bile acid-CoA:amino acid N-acyltransferase</fullName>
        <shortName>BACAT</shortName>
        <shortName>BAT</shortName>
        <ecNumber evidence="5">2.3.1.65</ecNumber>
    </recommendedName>
    <alternativeName>
        <fullName evidence="2">Bile acid-CoA thioesterase</fullName>
    </alternativeName>
    <alternativeName>
        <fullName>Choloyl-CoA hydrolase</fullName>
        <ecNumber evidence="2">3.1.2.27</ecNumber>
    </alternativeName>
    <alternativeName>
        <fullName>Glycine N-choloyltransferase</fullName>
    </alternativeName>
    <alternativeName>
        <fullName>Long-chain fatty-acyl-CoA hydrolase</fullName>
        <ecNumber evidence="2">3.1.2.2</ecNumber>
    </alternativeName>
</protein>
<comment type="function">
    <text evidence="2 5">Catalyzes the amidation of bile acids (BAs) with the amino acid taurine (PubMed:9215542). Selective for taurine conjugation of cholyl CoA and only taurine-conjugated BAs are found in bile (PubMed:9215542). Amidation of BAs in the liver with taurine prior to their excretion into bile is an important biochemical event in bile acid metabolism (By similarity). This conjugation (or amidation) plays several important biological roles in that it promotes the secretion of BAs and cholesterol into bile and increases the detergent properties of BAs in the intestine, which facilitates lipid and vitamin absorption (By similarity). May also act as an acyl-CoA thioesterase that regulates intracellular levels of free fatty acids (By similarity). In vitro, catalyzes the hydrolysis of long- and very long-chain saturated acyl-CoAs to the free fatty acid and coenzyme A (CoASH), and conjugates glycine to these acyl-CoAs (By similarity).</text>
</comment>
<comment type="catalytic activity">
    <reaction evidence="5">
        <text>choloyl-CoA + glycine = glycocholate + CoA + H(+)</text>
        <dbReference type="Rhea" id="RHEA:14001"/>
        <dbReference type="ChEBI" id="CHEBI:15378"/>
        <dbReference type="ChEBI" id="CHEBI:29746"/>
        <dbReference type="ChEBI" id="CHEBI:57287"/>
        <dbReference type="ChEBI" id="CHEBI:57305"/>
        <dbReference type="ChEBI" id="CHEBI:57373"/>
        <dbReference type="EC" id="2.3.1.65"/>
    </reaction>
    <physiologicalReaction direction="left-to-right" evidence="7">
        <dbReference type="Rhea" id="RHEA:14002"/>
    </physiologicalReaction>
</comment>
<comment type="catalytic activity">
    <reaction evidence="2">
        <text>hexadecanoyl-CoA + H2O = hexadecanoate + CoA + H(+)</text>
        <dbReference type="Rhea" id="RHEA:16645"/>
        <dbReference type="ChEBI" id="CHEBI:7896"/>
        <dbReference type="ChEBI" id="CHEBI:15377"/>
        <dbReference type="ChEBI" id="CHEBI:15378"/>
        <dbReference type="ChEBI" id="CHEBI:57287"/>
        <dbReference type="ChEBI" id="CHEBI:57379"/>
        <dbReference type="EC" id="3.1.2.2"/>
    </reaction>
    <physiologicalReaction direction="left-to-right" evidence="2">
        <dbReference type="Rhea" id="RHEA:16646"/>
    </physiologicalReaction>
</comment>
<comment type="catalytic activity">
    <reaction evidence="2">
        <text>choloyl-CoA + H2O = cholate + CoA + H(+)</text>
        <dbReference type="Rhea" id="RHEA:14541"/>
        <dbReference type="ChEBI" id="CHEBI:15377"/>
        <dbReference type="ChEBI" id="CHEBI:15378"/>
        <dbReference type="ChEBI" id="CHEBI:29747"/>
        <dbReference type="ChEBI" id="CHEBI:57287"/>
        <dbReference type="ChEBI" id="CHEBI:57373"/>
        <dbReference type="EC" id="3.1.2.27"/>
    </reaction>
    <physiologicalReaction direction="left-to-right" evidence="2">
        <dbReference type="Rhea" id="RHEA:14542"/>
    </physiologicalReaction>
</comment>
<comment type="catalytic activity">
    <reaction evidence="2">
        <text>chenodeoxycholoyl-CoA + H2O = chenodeoxycholate + CoA + H(+)</text>
        <dbReference type="Rhea" id="RHEA:31511"/>
        <dbReference type="ChEBI" id="CHEBI:15377"/>
        <dbReference type="ChEBI" id="CHEBI:15378"/>
        <dbReference type="ChEBI" id="CHEBI:36234"/>
        <dbReference type="ChEBI" id="CHEBI:57287"/>
        <dbReference type="ChEBI" id="CHEBI:62989"/>
        <dbReference type="EC" id="3.1.2.27"/>
    </reaction>
    <physiologicalReaction direction="left-to-right" evidence="2">
        <dbReference type="Rhea" id="RHEA:31512"/>
    </physiologicalReaction>
</comment>
<comment type="catalytic activity">
    <reaction evidence="2">
        <text>eicosanoyl-CoA + H2O = eicosanoate + CoA + H(+)</text>
        <dbReference type="Rhea" id="RHEA:40147"/>
        <dbReference type="ChEBI" id="CHEBI:15377"/>
        <dbReference type="ChEBI" id="CHEBI:15378"/>
        <dbReference type="ChEBI" id="CHEBI:32360"/>
        <dbReference type="ChEBI" id="CHEBI:57287"/>
        <dbReference type="ChEBI" id="CHEBI:57380"/>
    </reaction>
    <physiologicalReaction direction="left-to-right" evidence="2">
        <dbReference type="Rhea" id="RHEA:40148"/>
    </physiologicalReaction>
</comment>
<comment type="catalytic activity">
    <reaction evidence="2">
        <text>octadecanoyl-CoA + H2O = octadecanoate + CoA + H(+)</text>
        <dbReference type="Rhea" id="RHEA:30139"/>
        <dbReference type="ChEBI" id="CHEBI:15377"/>
        <dbReference type="ChEBI" id="CHEBI:15378"/>
        <dbReference type="ChEBI" id="CHEBI:25629"/>
        <dbReference type="ChEBI" id="CHEBI:57287"/>
        <dbReference type="ChEBI" id="CHEBI:57394"/>
    </reaction>
    <physiologicalReaction direction="left-to-right" evidence="2">
        <dbReference type="Rhea" id="RHEA:30140"/>
    </physiologicalReaction>
</comment>
<comment type="catalytic activity">
    <reaction evidence="2">
        <text>docosanoyl-CoA + H2O = docosanoate + CoA + H(+)</text>
        <dbReference type="Rhea" id="RHEA:40783"/>
        <dbReference type="ChEBI" id="CHEBI:15377"/>
        <dbReference type="ChEBI" id="CHEBI:15378"/>
        <dbReference type="ChEBI" id="CHEBI:23858"/>
        <dbReference type="ChEBI" id="CHEBI:57287"/>
        <dbReference type="ChEBI" id="CHEBI:65059"/>
    </reaction>
    <physiologicalReaction direction="left-to-right" evidence="2">
        <dbReference type="Rhea" id="RHEA:40784"/>
    </physiologicalReaction>
</comment>
<comment type="catalytic activity">
    <reaction evidence="2">
        <text>tetracosanoyl-CoA + H2O = tetracosanoate + CoA + H(+)</text>
        <dbReference type="Rhea" id="RHEA:40787"/>
        <dbReference type="ChEBI" id="CHEBI:15377"/>
        <dbReference type="ChEBI" id="CHEBI:15378"/>
        <dbReference type="ChEBI" id="CHEBI:31014"/>
        <dbReference type="ChEBI" id="CHEBI:57287"/>
        <dbReference type="ChEBI" id="CHEBI:65052"/>
    </reaction>
    <physiologicalReaction direction="left-to-right" evidence="2">
        <dbReference type="Rhea" id="RHEA:40788"/>
    </physiologicalReaction>
</comment>
<comment type="catalytic activity">
    <reaction evidence="2">
        <text>hexacosanoyl-CoA + H2O = hexacosanoate + CoA + H(+)</text>
        <dbReference type="Rhea" id="RHEA:40791"/>
        <dbReference type="ChEBI" id="CHEBI:15377"/>
        <dbReference type="ChEBI" id="CHEBI:15378"/>
        <dbReference type="ChEBI" id="CHEBI:31013"/>
        <dbReference type="ChEBI" id="CHEBI:57287"/>
        <dbReference type="ChEBI" id="CHEBI:64868"/>
    </reaction>
    <physiologicalReaction direction="left-to-right" evidence="2">
        <dbReference type="Rhea" id="RHEA:40792"/>
    </physiologicalReaction>
</comment>
<comment type="catalytic activity">
    <reaction evidence="2">
        <text>dodecanoyl-CoA + H2O = dodecanoate + CoA + H(+)</text>
        <dbReference type="Rhea" id="RHEA:30135"/>
        <dbReference type="ChEBI" id="CHEBI:15377"/>
        <dbReference type="ChEBI" id="CHEBI:15378"/>
        <dbReference type="ChEBI" id="CHEBI:18262"/>
        <dbReference type="ChEBI" id="CHEBI:57287"/>
        <dbReference type="ChEBI" id="CHEBI:57375"/>
    </reaction>
    <physiologicalReaction direction="left-to-right" evidence="2">
        <dbReference type="Rhea" id="RHEA:30136"/>
    </physiologicalReaction>
</comment>
<comment type="catalytic activity">
    <reaction evidence="2">
        <text>tetradecanoyl-CoA + H2O = tetradecanoate + CoA + H(+)</text>
        <dbReference type="Rhea" id="RHEA:40119"/>
        <dbReference type="ChEBI" id="CHEBI:15377"/>
        <dbReference type="ChEBI" id="CHEBI:15378"/>
        <dbReference type="ChEBI" id="CHEBI:30807"/>
        <dbReference type="ChEBI" id="CHEBI:57287"/>
        <dbReference type="ChEBI" id="CHEBI:57385"/>
    </reaction>
    <physiologicalReaction direction="left-to-right" evidence="2">
        <dbReference type="Rhea" id="RHEA:40120"/>
    </physiologicalReaction>
</comment>
<comment type="catalytic activity">
    <reaction evidence="2">
        <text>choloyl-CoA + taurine = taurocholate + CoA + H(+)</text>
        <dbReference type="Rhea" id="RHEA:47100"/>
        <dbReference type="ChEBI" id="CHEBI:15378"/>
        <dbReference type="ChEBI" id="CHEBI:36257"/>
        <dbReference type="ChEBI" id="CHEBI:57287"/>
        <dbReference type="ChEBI" id="CHEBI:57373"/>
        <dbReference type="ChEBI" id="CHEBI:507393"/>
    </reaction>
    <physiologicalReaction direction="left-to-right" evidence="2">
        <dbReference type="Rhea" id="RHEA:47101"/>
    </physiologicalReaction>
</comment>
<comment type="catalytic activity">
    <reaction evidence="2">
        <text>chenodeoxycholoyl-CoA + glycine = glycochenodeoxycholate + CoA + H(+)</text>
        <dbReference type="Rhea" id="RHEA:49788"/>
        <dbReference type="ChEBI" id="CHEBI:15378"/>
        <dbReference type="ChEBI" id="CHEBI:36252"/>
        <dbReference type="ChEBI" id="CHEBI:57287"/>
        <dbReference type="ChEBI" id="CHEBI:57305"/>
        <dbReference type="ChEBI" id="CHEBI:62989"/>
    </reaction>
    <physiologicalReaction direction="left-to-right" evidence="2">
        <dbReference type="Rhea" id="RHEA:49789"/>
    </physiologicalReaction>
</comment>
<comment type="catalytic activity">
    <reaction evidence="2">
        <text>chenodeoxycholoyl-CoA + taurine = taurochenodeoxycholate + CoA + H(+)</text>
        <dbReference type="Rhea" id="RHEA:49784"/>
        <dbReference type="ChEBI" id="CHEBI:9407"/>
        <dbReference type="ChEBI" id="CHEBI:15378"/>
        <dbReference type="ChEBI" id="CHEBI:57287"/>
        <dbReference type="ChEBI" id="CHEBI:62989"/>
        <dbReference type="ChEBI" id="CHEBI:507393"/>
    </reaction>
    <physiologicalReaction direction="left-to-right" evidence="2">
        <dbReference type="Rhea" id="RHEA:49785"/>
    </physiologicalReaction>
</comment>
<comment type="catalytic activity">
    <reaction evidence="2">
        <text>eicosanoyl-CoA + glycine = N-eicosanoylglycinate + CoA + H(+)</text>
        <dbReference type="Rhea" id="RHEA:49792"/>
        <dbReference type="ChEBI" id="CHEBI:15378"/>
        <dbReference type="ChEBI" id="CHEBI:57287"/>
        <dbReference type="ChEBI" id="CHEBI:57305"/>
        <dbReference type="ChEBI" id="CHEBI:57380"/>
        <dbReference type="ChEBI" id="CHEBI:87391"/>
    </reaction>
    <physiologicalReaction direction="left-to-right" evidence="2">
        <dbReference type="Rhea" id="RHEA:49793"/>
    </physiologicalReaction>
</comment>
<comment type="catalytic activity">
    <reaction evidence="2">
        <text>hexacosanoyl-CoA + glycine = N-hexacosanoylglycine + CoA + H(+)</text>
        <dbReference type="Rhea" id="RHEA:49772"/>
        <dbReference type="ChEBI" id="CHEBI:15378"/>
        <dbReference type="ChEBI" id="CHEBI:57287"/>
        <dbReference type="ChEBI" id="CHEBI:57305"/>
        <dbReference type="ChEBI" id="CHEBI:64868"/>
        <dbReference type="ChEBI" id="CHEBI:87414"/>
    </reaction>
    <physiologicalReaction direction="left-to-right" evidence="2">
        <dbReference type="Rhea" id="RHEA:49773"/>
    </physiologicalReaction>
</comment>
<comment type="catalytic activity">
    <reaction evidence="2">
        <text>docosanoyl-CoA + glycine = N-docosanoylglycine + CoA + H(+)</text>
        <dbReference type="Rhea" id="RHEA:49780"/>
        <dbReference type="ChEBI" id="CHEBI:15378"/>
        <dbReference type="ChEBI" id="CHEBI:57287"/>
        <dbReference type="ChEBI" id="CHEBI:57305"/>
        <dbReference type="ChEBI" id="CHEBI:65059"/>
        <dbReference type="ChEBI" id="CHEBI:87410"/>
    </reaction>
    <physiologicalReaction direction="left-to-right" evidence="2">
        <dbReference type="Rhea" id="RHEA:49781"/>
    </physiologicalReaction>
</comment>
<comment type="biophysicochemical properties">
    <kinetics>
        <KM evidence="5">1.9 mM for taurine toward choloyl-CoA</KM>
    </kinetics>
</comment>
<comment type="subunit">
    <text evidence="2">Monomer.</text>
</comment>
<comment type="subcellular location">
    <subcellularLocation>
        <location evidence="2">Cytoplasm</location>
        <location evidence="2">Cytosol</location>
    </subcellularLocation>
    <subcellularLocation>
        <location evidence="3">Peroxisome</location>
    </subcellularLocation>
</comment>
<comment type="tissue specificity">
    <text evidence="4 5">Highly expressed in liver, kidney, gallbladder, proximal intestine and distal intestine. Weakly expressed in adrenal gland, lung, brain and muscle.</text>
</comment>
<comment type="similarity">
    <text evidence="6">Belongs to the C/M/P thioester hydrolase family.</text>
</comment>
<comment type="sequence caution" evidence="6">
    <conflict type="frameshift">
        <sequence resource="EMBL-CDS" id="AAB58325"/>
    </conflict>
</comment>
<comment type="sequence caution" evidence="6">
    <conflict type="frameshift">
        <sequence resource="EMBL-CDS" id="BAC25534"/>
    </conflict>
</comment>
<dbReference type="EC" id="2.3.1.65" evidence="5"/>
<dbReference type="EC" id="3.1.2.27" evidence="2"/>
<dbReference type="EC" id="3.1.2.2" evidence="2"/>
<dbReference type="EMBL" id="U95215">
    <property type="protein sequence ID" value="AAB58325.1"/>
    <property type="status" value="ALT_FRAME"/>
    <property type="molecule type" value="mRNA"/>
</dbReference>
<dbReference type="EMBL" id="AK017923">
    <property type="protein sequence ID" value="BAC25534.1"/>
    <property type="status" value="ALT_FRAME"/>
    <property type="molecule type" value="mRNA"/>
</dbReference>
<dbReference type="EMBL" id="AL772310">
    <property type="status" value="NOT_ANNOTATED_CDS"/>
    <property type="molecule type" value="Genomic_DNA"/>
</dbReference>
<dbReference type="EMBL" id="CH466565">
    <property type="protein sequence ID" value="EDL02319.1"/>
    <property type="molecule type" value="Genomic_DNA"/>
</dbReference>
<dbReference type="EMBL" id="BC012683">
    <property type="status" value="NOT_ANNOTATED_CDS"/>
    <property type="molecule type" value="mRNA"/>
</dbReference>
<dbReference type="CCDS" id="CCDS18173.1"/>
<dbReference type="RefSeq" id="NP_031545.2">
    <property type="nucleotide sequence ID" value="NM_007519.3"/>
</dbReference>
<dbReference type="SMR" id="Q91X34"/>
<dbReference type="FunCoup" id="Q91X34">
    <property type="interactions" value="240"/>
</dbReference>
<dbReference type="STRING" id="10090.ENSMUSP00000041983"/>
<dbReference type="ESTHER" id="mouse-BAAT">
    <property type="family name" value="Acyl-CoA_Thioesterase"/>
</dbReference>
<dbReference type="MEROPS" id="S09.A50"/>
<dbReference type="GlyGen" id="Q91X34">
    <property type="glycosylation" value="1 site, 1 O-linked glycan (1 site)"/>
</dbReference>
<dbReference type="iPTMnet" id="Q91X34"/>
<dbReference type="PhosphoSitePlus" id="Q91X34"/>
<dbReference type="SwissPalm" id="Q91X34"/>
<dbReference type="jPOST" id="Q91X34"/>
<dbReference type="PaxDb" id="10090-ENSMUSP00000041983"/>
<dbReference type="PeptideAtlas" id="Q91X34"/>
<dbReference type="ProteomicsDB" id="277102"/>
<dbReference type="Antibodypedia" id="14641">
    <property type="antibodies" value="203 antibodies from 29 providers"/>
</dbReference>
<dbReference type="DNASU" id="12012"/>
<dbReference type="Ensembl" id="ENSMUST00000043056.9">
    <property type="protein sequence ID" value="ENSMUSP00000041983.3"/>
    <property type="gene ID" value="ENSMUSG00000039653.10"/>
</dbReference>
<dbReference type="Ensembl" id="ENSMUST00000166036.2">
    <property type="protein sequence ID" value="ENSMUSP00000129603.2"/>
    <property type="gene ID" value="ENSMUSG00000039653.10"/>
</dbReference>
<dbReference type="GeneID" id="12012"/>
<dbReference type="KEGG" id="mmu:12012"/>
<dbReference type="UCSC" id="uc008svt.2">
    <property type="organism name" value="mouse"/>
</dbReference>
<dbReference type="AGR" id="MGI:106642"/>
<dbReference type="CTD" id="570"/>
<dbReference type="MGI" id="MGI:106642">
    <property type="gene designation" value="Baat"/>
</dbReference>
<dbReference type="VEuPathDB" id="HostDB:ENSMUSG00000039653"/>
<dbReference type="eggNOG" id="ENOG502QQ8Z">
    <property type="taxonomic scope" value="Eukaryota"/>
</dbReference>
<dbReference type="GeneTree" id="ENSGT01010000222336"/>
<dbReference type="HOGENOM" id="CLU_029849_4_0_1"/>
<dbReference type="InParanoid" id="Q91X34"/>
<dbReference type="OMA" id="ISKPHAM"/>
<dbReference type="OrthoDB" id="6347013at2759"/>
<dbReference type="PhylomeDB" id="Q91X34"/>
<dbReference type="TreeFam" id="TF314911"/>
<dbReference type="Reactome" id="R-MMU-159418">
    <property type="pathway name" value="Recycling of bile acids and salts"/>
</dbReference>
<dbReference type="Reactome" id="R-MMU-193368">
    <property type="pathway name" value="Synthesis of bile acids and bile salts via 7alpha-hydroxycholesterol"/>
</dbReference>
<dbReference type="Reactome" id="R-MMU-9033241">
    <property type="pathway name" value="Peroxisomal protein import"/>
</dbReference>
<dbReference type="SABIO-RK" id="Q91X34"/>
<dbReference type="BioGRID-ORCS" id="12012">
    <property type="hits" value="3 hits in 80 CRISPR screens"/>
</dbReference>
<dbReference type="PRO" id="PR:Q91X34"/>
<dbReference type="Proteomes" id="UP000000589">
    <property type="component" value="Chromosome 4"/>
</dbReference>
<dbReference type="RNAct" id="Q91X34">
    <property type="molecule type" value="protein"/>
</dbReference>
<dbReference type="Bgee" id="ENSMUSG00000039653">
    <property type="expression patterns" value="Expressed in left lobe of liver and 21 other cell types or tissues"/>
</dbReference>
<dbReference type="GO" id="GO:0005829">
    <property type="term" value="C:cytosol"/>
    <property type="evidence" value="ECO:0000314"/>
    <property type="project" value="UniProtKB"/>
</dbReference>
<dbReference type="GO" id="GO:0005777">
    <property type="term" value="C:peroxisome"/>
    <property type="evidence" value="ECO:0007669"/>
    <property type="project" value="UniProtKB-SubCell"/>
</dbReference>
<dbReference type="GO" id="GO:0052689">
    <property type="term" value="F:carboxylic ester hydrolase activity"/>
    <property type="evidence" value="ECO:0007669"/>
    <property type="project" value="UniProtKB-KW"/>
</dbReference>
<dbReference type="GO" id="GO:0033882">
    <property type="term" value="F:choloyl-CoA hydrolase activity"/>
    <property type="evidence" value="ECO:0007669"/>
    <property type="project" value="UniProtKB-EC"/>
</dbReference>
<dbReference type="GO" id="GO:0047963">
    <property type="term" value="F:glycine N-choloyltransferase activity"/>
    <property type="evidence" value="ECO:0007669"/>
    <property type="project" value="UniProtKB-EC"/>
</dbReference>
<dbReference type="GO" id="GO:0052816">
    <property type="term" value="F:long-chain fatty acyl-CoA hydrolase activity"/>
    <property type="evidence" value="ECO:0007669"/>
    <property type="project" value="Ensembl"/>
</dbReference>
<dbReference type="GO" id="GO:0052815">
    <property type="term" value="F:medium-chain fatty acyl-CoA hydrolase activity"/>
    <property type="evidence" value="ECO:0007669"/>
    <property type="project" value="Ensembl"/>
</dbReference>
<dbReference type="GO" id="GO:0016410">
    <property type="term" value="F:N-acyltransferase activity"/>
    <property type="evidence" value="ECO:0000314"/>
    <property type="project" value="MGI"/>
</dbReference>
<dbReference type="GO" id="GO:0052817">
    <property type="term" value="F:very long-chain fatty acyl-CoA hydrolase activity"/>
    <property type="evidence" value="ECO:0007669"/>
    <property type="project" value="Ensembl"/>
</dbReference>
<dbReference type="GO" id="GO:0006637">
    <property type="term" value="P:acyl-CoA metabolic process"/>
    <property type="evidence" value="ECO:0007669"/>
    <property type="project" value="Ensembl"/>
</dbReference>
<dbReference type="GO" id="GO:0031100">
    <property type="term" value="P:animal organ regeneration"/>
    <property type="evidence" value="ECO:0007669"/>
    <property type="project" value="Ensembl"/>
</dbReference>
<dbReference type="GO" id="GO:0006699">
    <property type="term" value="P:bile acid biosynthetic process"/>
    <property type="evidence" value="ECO:0007669"/>
    <property type="project" value="Ensembl"/>
</dbReference>
<dbReference type="GO" id="GO:0002152">
    <property type="term" value="P:bile acid conjugation"/>
    <property type="evidence" value="ECO:0007669"/>
    <property type="project" value="Ensembl"/>
</dbReference>
<dbReference type="GO" id="GO:0008206">
    <property type="term" value="P:bile acid metabolic process"/>
    <property type="evidence" value="ECO:0000314"/>
    <property type="project" value="MGI"/>
</dbReference>
<dbReference type="GO" id="GO:0006631">
    <property type="term" value="P:fatty acid metabolic process"/>
    <property type="evidence" value="ECO:0007669"/>
    <property type="project" value="UniProtKB-KW"/>
</dbReference>
<dbReference type="GO" id="GO:0006544">
    <property type="term" value="P:glycine metabolic process"/>
    <property type="evidence" value="ECO:0007669"/>
    <property type="project" value="Ensembl"/>
</dbReference>
<dbReference type="GO" id="GO:0001889">
    <property type="term" value="P:liver development"/>
    <property type="evidence" value="ECO:0007669"/>
    <property type="project" value="Ensembl"/>
</dbReference>
<dbReference type="GO" id="GO:0019530">
    <property type="term" value="P:taurine metabolic process"/>
    <property type="evidence" value="ECO:0007669"/>
    <property type="project" value="Ensembl"/>
</dbReference>
<dbReference type="FunFam" id="2.60.40.2240:FF:000001">
    <property type="entry name" value="acyl-coenzyme A thioesterase 4"/>
    <property type="match status" value="1"/>
</dbReference>
<dbReference type="FunFam" id="3.40.50.1820:FF:000024">
    <property type="entry name" value="acyl-coenzyme A thioesterase 4"/>
    <property type="match status" value="1"/>
</dbReference>
<dbReference type="Gene3D" id="2.60.40.2240">
    <property type="entry name" value="Acyl-CoA thioester hydrolase/BAAT N-terminal domain"/>
    <property type="match status" value="1"/>
</dbReference>
<dbReference type="Gene3D" id="3.40.50.1820">
    <property type="entry name" value="alpha/beta hydrolase"/>
    <property type="match status" value="1"/>
</dbReference>
<dbReference type="InterPro" id="IPR029058">
    <property type="entry name" value="AB_hydrolase_fold"/>
</dbReference>
<dbReference type="InterPro" id="IPR016662">
    <property type="entry name" value="Acyl-CoA_thioEstase_long-chain"/>
</dbReference>
<dbReference type="InterPro" id="IPR014940">
    <property type="entry name" value="BAAT_C"/>
</dbReference>
<dbReference type="InterPro" id="IPR006862">
    <property type="entry name" value="Thio_Ohase/aa_AcTrfase"/>
</dbReference>
<dbReference type="InterPro" id="IPR042490">
    <property type="entry name" value="Thio_Ohase/BAAT_N"/>
</dbReference>
<dbReference type="PANTHER" id="PTHR10824">
    <property type="entry name" value="ACYL-COENZYME A THIOESTERASE-RELATED"/>
    <property type="match status" value="1"/>
</dbReference>
<dbReference type="PANTHER" id="PTHR10824:SF18">
    <property type="entry name" value="BILE ACID-COA:AMINO ACID N-ACYLTRANSFERASE"/>
    <property type="match status" value="1"/>
</dbReference>
<dbReference type="Pfam" id="PF08840">
    <property type="entry name" value="BAAT_C"/>
    <property type="match status" value="1"/>
</dbReference>
<dbReference type="Pfam" id="PF04775">
    <property type="entry name" value="Bile_Hydr_Trans"/>
    <property type="match status" value="1"/>
</dbReference>
<dbReference type="PIRSF" id="PIRSF016521">
    <property type="entry name" value="Acyl-CoA_hydro"/>
    <property type="match status" value="1"/>
</dbReference>
<dbReference type="SUPFAM" id="SSF53474">
    <property type="entry name" value="alpha/beta-Hydrolases"/>
    <property type="match status" value="1"/>
</dbReference>
<keyword id="KW-0012">Acyltransferase</keyword>
<keyword id="KW-0963">Cytoplasm</keyword>
<keyword id="KW-0276">Fatty acid metabolism</keyword>
<keyword id="KW-0378">Hydrolase</keyword>
<keyword id="KW-0443">Lipid metabolism</keyword>
<keyword id="KW-0576">Peroxisome</keyword>
<keyword id="KW-0597">Phosphoprotein</keyword>
<keyword id="KW-1185">Reference proteome</keyword>
<keyword id="KW-0719">Serine esterase</keyword>
<keyword id="KW-0808">Transferase</keyword>